<keyword id="KW-0963">Cytoplasm</keyword>
<keyword id="KW-0489">Methyltransferase</keyword>
<keyword id="KW-0698">rRNA processing</keyword>
<keyword id="KW-0949">S-adenosyl-L-methionine</keyword>
<keyword id="KW-0808">Transferase</keyword>
<gene>
    <name evidence="1" type="primary">rsmC</name>
    <name type="ordered locus">ACIAD0701</name>
</gene>
<dbReference type="EC" id="2.1.1.172" evidence="1"/>
<dbReference type="EMBL" id="CR543861">
    <property type="protein sequence ID" value="CAG67612.1"/>
    <property type="molecule type" value="Genomic_DNA"/>
</dbReference>
<dbReference type="RefSeq" id="WP_004922607.1">
    <property type="nucleotide sequence ID" value="NC_005966.1"/>
</dbReference>
<dbReference type="SMR" id="Q6FE96"/>
<dbReference type="STRING" id="202950.GCA_001485005_02462"/>
<dbReference type="GeneID" id="45233171"/>
<dbReference type="KEGG" id="aci:ACIAD0701"/>
<dbReference type="eggNOG" id="COG2813">
    <property type="taxonomic scope" value="Bacteria"/>
</dbReference>
<dbReference type="HOGENOM" id="CLU_049581_0_0_6"/>
<dbReference type="OrthoDB" id="9816072at2"/>
<dbReference type="BioCyc" id="ASP62977:ACIAD_RS03215-MONOMER"/>
<dbReference type="Proteomes" id="UP000000430">
    <property type="component" value="Chromosome"/>
</dbReference>
<dbReference type="GO" id="GO:0005737">
    <property type="term" value="C:cytoplasm"/>
    <property type="evidence" value="ECO:0007669"/>
    <property type="project" value="UniProtKB-SubCell"/>
</dbReference>
<dbReference type="GO" id="GO:0052914">
    <property type="term" value="F:16S rRNA (guanine(1207)-N(2))-methyltransferase activity"/>
    <property type="evidence" value="ECO:0007669"/>
    <property type="project" value="UniProtKB-EC"/>
</dbReference>
<dbReference type="GO" id="GO:0003676">
    <property type="term" value="F:nucleic acid binding"/>
    <property type="evidence" value="ECO:0007669"/>
    <property type="project" value="InterPro"/>
</dbReference>
<dbReference type="CDD" id="cd02440">
    <property type="entry name" value="AdoMet_MTases"/>
    <property type="match status" value="1"/>
</dbReference>
<dbReference type="Gene3D" id="3.40.50.150">
    <property type="entry name" value="Vaccinia Virus protein VP39"/>
    <property type="match status" value="2"/>
</dbReference>
<dbReference type="HAMAP" id="MF_01862">
    <property type="entry name" value="16SrRNA_methyltr_C"/>
    <property type="match status" value="1"/>
</dbReference>
<dbReference type="InterPro" id="IPR002052">
    <property type="entry name" value="DNA_methylase_N6_adenine_CS"/>
</dbReference>
<dbReference type="InterPro" id="IPR013675">
    <property type="entry name" value="Mtase_sm_N"/>
</dbReference>
<dbReference type="InterPro" id="IPR023543">
    <property type="entry name" value="rRNA_ssu_MeTfrase_C"/>
</dbReference>
<dbReference type="InterPro" id="IPR046977">
    <property type="entry name" value="RsmC/RlmG"/>
</dbReference>
<dbReference type="InterPro" id="IPR029063">
    <property type="entry name" value="SAM-dependent_MTases_sf"/>
</dbReference>
<dbReference type="InterPro" id="IPR007848">
    <property type="entry name" value="Small_mtfrase_dom"/>
</dbReference>
<dbReference type="PANTHER" id="PTHR47816">
    <property type="entry name" value="RIBOSOMAL RNA SMALL SUBUNIT METHYLTRANSFERASE C"/>
    <property type="match status" value="1"/>
</dbReference>
<dbReference type="PANTHER" id="PTHR47816:SF4">
    <property type="entry name" value="RIBOSOMAL RNA SMALL SUBUNIT METHYLTRANSFERASE C"/>
    <property type="match status" value="1"/>
</dbReference>
<dbReference type="Pfam" id="PF05175">
    <property type="entry name" value="MTS"/>
    <property type="match status" value="1"/>
</dbReference>
<dbReference type="Pfam" id="PF08468">
    <property type="entry name" value="MTS_N"/>
    <property type="match status" value="1"/>
</dbReference>
<dbReference type="SUPFAM" id="SSF53335">
    <property type="entry name" value="S-adenosyl-L-methionine-dependent methyltransferases"/>
    <property type="match status" value="1"/>
</dbReference>
<evidence type="ECO:0000255" key="1">
    <source>
        <dbReference type="HAMAP-Rule" id="MF_01862"/>
    </source>
</evidence>
<accession>Q6FE96</accession>
<reference key="1">
    <citation type="journal article" date="2004" name="Nucleic Acids Res.">
        <title>Unique features revealed by the genome sequence of Acinetobacter sp. ADP1, a versatile and naturally transformation competent bacterium.</title>
        <authorList>
            <person name="Barbe V."/>
            <person name="Vallenet D."/>
            <person name="Fonknechten N."/>
            <person name="Kreimeyer A."/>
            <person name="Oztas S."/>
            <person name="Labarre L."/>
            <person name="Cruveiller S."/>
            <person name="Robert C."/>
            <person name="Duprat S."/>
            <person name="Wincker P."/>
            <person name="Ornston L.N."/>
            <person name="Weissenbach J."/>
            <person name="Marliere P."/>
            <person name="Cohen G.N."/>
            <person name="Medigue C."/>
        </authorList>
    </citation>
    <scope>NUCLEOTIDE SEQUENCE [LARGE SCALE GENOMIC DNA]</scope>
    <source>
        <strain>ATCC 33305 / BD413 / ADP1</strain>
    </source>
</reference>
<name>RSMC_ACIAD</name>
<comment type="function">
    <text evidence="1">Specifically methylates the guanine in position 1207 of 16S rRNA in the 30S particle.</text>
</comment>
<comment type="catalytic activity">
    <reaction evidence="1">
        <text>guanosine(1207) in 16S rRNA + S-adenosyl-L-methionine = N(2)-methylguanosine(1207) in 16S rRNA + S-adenosyl-L-homocysteine + H(+)</text>
        <dbReference type="Rhea" id="RHEA:42736"/>
        <dbReference type="Rhea" id="RHEA-COMP:10213"/>
        <dbReference type="Rhea" id="RHEA-COMP:10214"/>
        <dbReference type="ChEBI" id="CHEBI:15378"/>
        <dbReference type="ChEBI" id="CHEBI:57856"/>
        <dbReference type="ChEBI" id="CHEBI:59789"/>
        <dbReference type="ChEBI" id="CHEBI:74269"/>
        <dbReference type="ChEBI" id="CHEBI:74481"/>
        <dbReference type="EC" id="2.1.1.172"/>
    </reaction>
</comment>
<comment type="subunit">
    <text evidence="1">Monomer.</text>
</comment>
<comment type="subcellular location">
    <subcellularLocation>
        <location evidence="1">Cytoplasm</location>
    </subcellularLocation>
</comment>
<comment type="similarity">
    <text evidence="1">Belongs to the methyltransferase superfamily. RsmC family.</text>
</comment>
<organism>
    <name type="scientific">Acinetobacter baylyi (strain ATCC 33305 / BD413 / ADP1)</name>
    <dbReference type="NCBI Taxonomy" id="62977"/>
    <lineage>
        <taxon>Bacteria</taxon>
        <taxon>Pseudomonadati</taxon>
        <taxon>Pseudomonadota</taxon>
        <taxon>Gammaproteobacteria</taxon>
        <taxon>Moraxellales</taxon>
        <taxon>Moraxellaceae</taxon>
        <taxon>Acinetobacter</taxon>
    </lineage>
</organism>
<proteinExistence type="inferred from homology"/>
<sequence length="338" mass="38075">MDPRSEVVLRQQQYLAIKILLINPPADELAQQLAHKHQVSVWTWNFADHQYFQHQSIQSDFAVTFPDQIPDQVIIFVPKSKELLSYLLHVVVSHLPAGQHIFLVGEKKGGVERASKQLQSYGKTVKLDSARHCQLWQTTIETTEQLKPLEQWLKHYSVKNENIQLEIYALPGVFSQNHLDIGTAVLLPYLNQIKLGKIADFGCGAGVISAYLAQLSPHNEIHALDIDAFALRSTEFTFQRNGLASERLHLHAVTGIQDAPKALDVIVSNPPFHQGIHTDYSASEGLCKTAKQHLNTSGELWIVANRFLNYPLLIEQTFGQCQVKTDQQGFKILYAKAT</sequence>
<protein>
    <recommendedName>
        <fullName evidence="1">Ribosomal RNA small subunit methyltransferase C</fullName>
        <ecNumber evidence="1">2.1.1.172</ecNumber>
    </recommendedName>
    <alternativeName>
        <fullName evidence="1">16S rRNA m2G1207 methyltransferase</fullName>
    </alternativeName>
    <alternativeName>
        <fullName evidence="1">rRNA (guanine-N(2)-)-methyltransferase RsmC</fullName>
    </alternativeName>
</protein>
<feature type="chain" id="PRO_0000369680" description="Ribosomal RNA small subunit methyltransferase C">
    <location>
        <begin position="1"/>
        <end position="338"/>
    </location>
</feature>